<name>FDL27_ARATH</name>
<reference key="1">
    <citation type="journal article" date="1999" name="Nature">
        <title>Sequence and analysis of chromosome 4 of the plant Arabidopsis thaliana.</title>
        <authorList>
            <person name="Mayer K.F.X."/>
            <person name="Schueller C."/>
            <person name="Wambutt R."/>
            <person name="Murphy G."/>
            <person name="Volckaert G."/>
            <person name="Pohl T."/>
            <person name="Duesterhoeft A."/>
            <person name="Stiekema W."/>
            <person name="Entian K.-D."/>
            <person name="Terryn N."/>
            <person name="Harris B."/>
            <person name="Ansorge W."/>
            <person name="Brandt P."/>
            <person name="Grivell L.A."/>
            <person name="Rieger M."/>
            <person name="Weichselgartner M."/>
            <person name="de Simone V."/>
            <person name="Obermaier B."/>
            <person name="Mache R."/>
            <person name="Mueller M."/>
            <person name="Kreis M."/>
            <person name="Delseny M."/>
            <person name="Puigdomenech P."/>
            <person name="Watson M."/>
            <person name="Schmidtheini T."/>
            <person name="Reichert B."/>
            <person name="Portetelle D."/>
            <person name="Perez-Alonso M."/>
            <person name="Boutry M."/>
            <person name="Bancroft I."/>
            <person name="Vos P."/>
            <person name="Hoheisel J."/>
            <person name="Zimmermann W."/>
            <person name="Wedler H."/>
            <person name="Ridley P."/>
            <person name="Langham S.-A."/>
            <person name="McCullagh B."/>
            <person name="Bilham L."/>
            <person name="Robben J."/>
            <person name="van der Schueren J."/>
            <person name="Grymonprez B."/>
            <person name="Chuang Y.-J."/>
            <person name="Vandenbussche F."/>
            <person name="Braeken M."/>
            <person name="Weltjens I."/>
            <person name="Voet M."/>
            <person name="Bastiaens I."/>
            <person name="Aert R."/>
            <person name="Defoor E."/>
            <person name="Weitzenegger T."/>
            <person name="Bothe G."/>
            <person name="Ramsperger U."/>
            <person name="Hilbert H."/>
            <person name="Braun M."/>
            <person name="Holzer E."/>
            <person name="Brandt A."/>
            <person name="Peters S."/>
            <person name="van Staveren M."/>
            <person name="Dirkse W."/>
            <person name="Mooijman P."/>
            <person name="Klein Lankhorst R."/>
            <person name="Rose M."/>
            <person name="Hauf J."/>
            <person name="Koetter P."/>
            <person name="Berneiser S."/>
            <person name="Hempel S."/>
            <person name="Feldpausch M."/>
            <person name="Lamberth S."/>
            <person name="Van den Daele H."/>
            <person name="De Keyser A."/>
            <person name="Buysshaert C."/>
            <person name="Gielen J."/>
            <person name="Villarroel R."/>
            <person name="De Clercq R."/>
            <person name="van Montagu M."/>
            <person name="Rogers J."/>
            <person name="Cronin A."/>
            <person name="Quail M.A."/>
            <person name="Bray-Allen S."/>
            <person name="Clark L."/>
            <person name="Doggett J."/>
            <person name="Hall S."/>
            <person name="Kay M."/>
            <person name="Lennard N."/>
            <person name="McLay K."/>
            <person name="Mayes R."/>
            <person name="Pettett A."/>
            <person name="Rajandream M.A."/>
            <person name="Lyne M."/>
            <person name="Benes V."/>
            <person name="Rechmann S."/>
            <person name="Borkova D."/>
            <person name="Bloecker H."/>
            <person name="Scharfe M."/>
            <person name="Grimm M."/>
            <person name="Loehnert T.-H."/>
            <person name="Dose S."/>
            <person name="de Haan M."/>
            <person name="Maarse A.C."/>
            <person name="Schaefer M."/>
            <person name="Mueller-Auer S."/>
            <person name="Gabel C."/>
            <person name="Fuchs M."/>
            <person name="Fartmann B."/>
            <person name="Granderath K."/>
            <person name="Dauner D."/>
            <person name="Herzl A."/>
            <person name="Neumann S."/>
            <person name="Argiriou A."/>
            <person name="Vitale D."/>
            <person name="Liguori R."/>
            <person name="Piravandi E."/>
            <person name="Massenet O."/>
            <person name="Quigley F."/>
            <person name="Clabauld G."/>
            <person name="Muendlein A."/>
            <person name="Felber R."/>
            <person name="Schnabl S."/>
            <person name="Hiller R."/>
            <person name="Schmidt W."/>
            <person name="Lecharny A."/>
            <person name="Aubourg S."/>
            <person name="Chefdor F."/>
            <person name="Cooke R."/>
            <person name="Berger C."/>
            <person name="Monfort A."/>
            <person name="Casacuberta E."/>
            <person name="Gibbons T."/>
            <person name="Weber N."/>
            <person name="Vandenbol M."/>
            <person name="Bargues M."/>
            <person name="Terol J."/>
            <person name="Torres A."/>
            <person name="Perez-Perez A."/>
            <person name="Purnelle B."/>
            <person name="Bent E."/>
            <person name="Johnson S."/>
            <person name="Tacon D."/>
            <person name="Jesse T."/>
            <person name="Heijnen L."/>
            <person name="Schwarz S."/>
            <person name="Scholler P."/>
            <person name="Heber S."/>
            <person name="Francs P."/>
            <person name="Bielke C."/>
            <person name="Frishman D."/>
            <person name="Haase D."/>
            <person name="Lemcke K."/>
            <person name="Mewes H.-W."/>
            <person name="Stocker S."/>
            <person name="Zaccaria P."/>
            <person name="Bevan M."/>
            <person name="Wilson R.K."/>
            <person name="de la Bastide M."/>
            <person name="Habermann K."/>
            <person name="Parnell L."/>
            <person name="Dedhia N."/>
            <person name="Gnoj L."/>
            <person name="Schutz K."/>
            <person name="Huang E."/>
            <person name="Spiegel L."/>
            <person name="Sekhon M."/>
            <person name="Murray J."/>
            <person name="Sheet P."/>
            <person name="Cordes M."/>
            <person name="Abu-Threideh J."/>
            <person name="Stoneking T."/>
            <person name="Kalicki J."/>
            <person name="Graves T."/>
            <person name="Harmon G."/>
            <person name="Edwards J."/>
            <person name="Latreille P."/>
            <person name="Courtney L."/>
            <person name="Cloud J."/>
            <person name="Abbott A."/>
            <person name="Scott K."/>
            <person name="Johnson D."/>
            <person name="Minx P."/>
            <person name="Bentley D."/>
            <person name="Fulton B."/>
            <person name="Miller N."/>
            <person name="Greco T."/>
            <person name="Kemp K."/>
            <person name="Kramer J."/>
            <person name="Fulton L."/>
            <person name="Mardis E."/>
            <person name="Dante M."/>
            <person name="Pepin K."/>
            <person name="Hillier L.W."/>
            <person name="Nelson J."/>
            <person name="Spieth J."/>
            <person name="Ryan E."/>
            <person name="Andrews S."/>
            <person name="Geisel C."/>
            <person name="Layman D."/>
            <person name="Du H."/>
            <person name="Ali J."/>
            <person name="Berghoff A."/>
            <person name="Jones K."/>
            <person name="Drone K."/>
            <person name="Cotton M."/>
            <person name="Joshu C."/>
            <person name="Antonoiu B."/>
            <person name="Zidanic M."/>
            <person name="Strong C."/>
            <person name="Sun H."/>
            <person name="Lamar B."/>
            <person name="Yordan C."/>
            <person name="Ma P."/>
            <person name="Zhong J."/>
            <person name="Preston R."/>
            <person name="Vil D."/>
            <person name="Shekher M."/>
            <person name="Matero A."/>
            <person name="Shah R."/>
            <person name="Swaby I.K."/>
            <person name="O'Shaughnessy A."/>
            <person name="Rodriguez M."/>
            <person name="Hoffman J."/>
            <person name="Till S."/>
            <person name="Granat S."/>
            <person name="Shohdy N."/>
            <person name="Hasegawa A."/>
            <person name="Hameed A."/>
            <person name="Lodhi M."/>
            <person name="Johnson A."/>
            <person name="Chen E."/>
            <person name="Marra M.A."/>
            <person name="Martienssen R."/>
            <person name="McCombie W.R."/>
        </authorList>
    </citation>
    <scope>NUCLEOTIDE SEQUENCE [LARGE SCALE GENOMIC DNA]</scope>
    <source>
        <strain>cv. Columbia</strain>
    </source>
</reference>
<reference key="2">
    <citation type="journal article" date="2017" name="Plant J.">
        <title>Araport11: a complete reannotation of the Arabidopsis thaliana reference genome.</title>
        <authorList>
            <person name="Cheng C.Y."/>
            <person name="Krishnakumar V."/>
            <person name="Chan A.P."/>
            <person name="Thibaud-Nissen F."/>
            <person name="Schobel S."/>
            <person name="Town C.D."/>
        </authorList>
    </citation>
    <scope>GENOME REANNOTATION</scope>
    <source>
        <strain>cv. Columbia</strain>
    </source>
</reference>
<reference key="3">
    <citation type="journal article" date="2003" name="Science">
        <title>Empirical analysis of transcriptional activity in the Arabidopsis genome.</title>
        <authorList>
            <person name="Yamada K."/>
            <person name="Lim J."/>
            <person name="Dale J.M."/>
            <person name="Chen H."/>
            <person name="Shinn P."/>
            <person name="Palm C.J."/>
            <person name="Southwick A.M."/>
            <person name="Wu H.C."/>
            <person name="Kim C.J."/>
            <person name="Nguyen M."/>
            <person name="Pham P.K."/>
            <person name="Cheuk R.F."/>
            <person name="Karlin-Newmann G."/>
            <person name="Liu S.X."/>
            <person name="Lam B."/>
            <person name="Sakano H."/>
            <person name="Wu T."/>
            <person name="Yu G."/>
            <person name="Miranda M."/>
            <person name="Quach H.L."/>
            <person name="Tripp M."/>
            <person name="Chang C.H."/>
            <person name="Lee J.M."/>
            <person name="Toriumi M.J."/>
            <person name="Chan M.M."/>
            <person name="Tang C.C."/>
            <person name="Onodera C.S."/>
            <person name="Deng J.M."/>
            <person name="Akiyama K."/>
            <person name="Ansari Y."/>
            <person name="Arakawa T."/>
            <person name="Banh J."/>
            <person name="Banno F."/>
            <person name="Bowser L."/>
            <person name="Brooks S.Y."/>
            <person name="Carninci P."/>
            <person name="Chao Q."/>
            <person name="Choy N."/>
            <person name="Enju A."/>
            <person name="Goldsmith A.D."/>
            <person name="Gurjal M."/>
            <person name="Hansen N.F."/>
            <person name="Hayashizaki Y."/>
            <person name="Johnson-Hopson C."/>
            <person name="Hsuan V.W."/>
            <person name="Iida K."/>
            <person name="Karnes M."/>
            <person name="Khan S."/>
            <person name="Koesema E."/>
            <person name="Ishida J."/>
            <person name="Jiang P.X."/>
            <person name="Jones T."/>
            <person name="Kawai J."/>
            <person name="Kamiya A."/>
            <person name="Meyers C."/>
            <person name="Nakajima M."/>
            <person name="Narusaka M."/>
            <person name="Seki M."/>
            <person name="Sakurai T."/>
            <person name="Satou M."/>
            <person name="Tamse R."/>
            <person name="Vaysberg M."/>
            <person name="Wallender E.K."/>
            <person name="Wong C."/>
            <person name="Yamamura Y."/>
            <person name="Yuan S."/>
            <person name="Shinozaki K."/>
            <person name="Davis R.W."/>
            <person name="Theologis A."/>
            <person name="Ecker J.R."/>
        </authorList>
    </citation>
    <scope>NUCLEOTIDE SEQUENCE [LARGE SCALE MRNA]</scope>
    <source>
        <strain>cv. Columbia</strain>
    </source>
</reference>
<keyword id="KW-0433">Leucine-rich repeat</keyword>
<keyword id="KW-1185">Reference proteome</keyword>
<keyword id="KW-0677">Repeat</keyword>
<dbReference type="EMBL" id="AL049171">
    <property type="protein sequence ID" value="CAB38963.1"/>
    <property type="status" value="ALT_SEQ"/>
    <property type="molecule type" value="Genomic_DNA"/>
</dbReference>
<dbReference type="EMBL" id="AL161565">
    <property type="protein sequence ID" value="CAB79489.1"/>
    <property type="status" value="ALT_SEQ"/>
    <property type="molecule type" value="Genomic_DNA"/>
</dbReference>
<dbReference type="EMBL" id="CP002687">
    <property type="protein sequence ID" value="AEE85187.1"/>
    <property type="molecule type" value="Genomic_DNA"/>
</dbReference>
<dbReference type="EMBL" id="AY142504">
    <property type="protein sequence ID" value="AAN13055.1"/>
    <property type="molecule type" value="mRNA"/>
</dbReference>
<dbReference type="PIR" id="T06018">
    <property type="entry name" value="T06018"/>
</dbReference>
<dbReference type="RefSeq" id="NP_194364.2">
    <property type="nucleotide sequence ID" value="NM_118767.3"/>
</dbReference>
<dbReference type="SMR" id="Q8H1R7"/>
<dbReference type="BioGRID" id="14027">
    <property type="interactions" value="2"/>
</dbReference>
<dbReference type="FunCoup" id="Q8H1R7">
    <property type="interactions" value="369"/>
</dbReference>
<dbReference type="STRING" id="3702.Q8H1R7"/>
<dbReference type="PaxDb" id="3702-AT4G26340.1"/>
<dbReference type="DNASU" id="828740"/>
<dbReference type="EnsemblPlants" id="AT4G26340.1">
    <property type="protein sequence ID" value="AT4G26340.1"/>
    <property type="gene ID" value="AT4G26340"/>
</dbReference>
<dbReference type="GeneID" id="828740"/>
<dbReference type="Gramene" id="AT4G26340.1">
    <property type="protein sequence ID" value="AT4G26340.1"/>
    <property type="gene ID" value="AT4G26340"/>
</dbReference>
<dbReference type="KEGG" id="ath:AT4G26340"/>
<dbReference type="Araport" id="AT4G26340"/>
<dbReference type="TAIR" id="AT4G26340"/>
<dbReference type="eggNOG" id="ENOG502RYTW">
    <property type="taxonomic scope" value="Eukaryota"/>
</dbReference>
<dbReference type="HOGENOM" id="CLU_010721_1_2_1"/>
<dbReference type="InParanoid" id="Q8H1R7"/>
<dbReference type="OMA" id="CRDFKHW"/>
<dbReference type="OrthoDB" id="612216at2759"/>
<dbReference type="PhylomeDB" id="Q8H1R7"/>
<dbReference type="PRO" id="PR:Q8H1R7"/>
<dbReference type="Proteomes" id="UP000006548">
    <property type="component" value="Chromosome 4"/>
</dbReference>
<dbReference type="ExpressionAtlas" id="Q8H1R7">
    <property type="expression patterns" value="baseline and differential"/>
</dbReference>
<dbReference type="CDD" id="cd22160">
    <property type="entry name" value="F-box_AtFBL13-like"/>
    <property type="match status" value="1"/>
</dbReference>
<dbReference type="Gene3D" id="1.20.1280.50">
    <property type="match status" value="1"/>
</dbReference>
<dbReference type="Gene3D" id="3.80.10.10">
    <property type="entry name" value="Ribonuclease Inhibitor"/>
    <property type="match status" value="1"/>
</dbReference>
<dbReference type="InterPro" id="IPR036047">
    <property type="entry name" value="F-box-like_dom_sf"/>
</dbReference>
<dbReference type="InterPro" id="IPR053781">
    <property type="entry name" value="F-box_AtFBL13-like"/>
</dbReference>
<dbReference type="InterPro" id="IPR001810">
    <property type="entry name" value="F-box_dom"/>
</dbReference>
<dbReference type="InterPro" id="IPR006566">
    <property type="entry name" value="FBD"/>
</dbReference>
<dbReference type="InterPro" id="IPR050232">
    <property type="entry name" value="FBL13/AtMIF1-like"/>
</dbReference>
<dbReference type="InterPro" id="IPR032675">
    <property type="entry name" value="LRR_dom_sf"/>
</dbReference>
<dbReference type="InterPro" id="IPR055411">
    <property type="entry name" value="LRR_FXL15/At3g58940/PEG3-like"/>
</dbReference>
<dbReference type="PANTHER" id="PTHR31900:SF34">
    <property type="entry name" value="EMB|CAB62440.1-RELATED"/>
    <property type="match status" value="1"/>
</dbReference>
<dbReference type="PANTHER" id="PTHR31900">
    <property type="entry name" value="F-BOX/RNI SUPERFAMILY PROTEIN-RELATED"/>
    <property type="match status" value="1"/>
</dbReference>
<dbReference type="Pfam" id="PF00646">
    <property type="entry name" value="F-box"/>
    <property type="match status" value="1"/>
</dbReference>
<dbReference type="Pfam" id="PF08387">
    <property type="entry name" value="FBD"/>
    <property type="match status" value="1"/>
</dbReference>
<dbReference type="Pfam" id="PF24758">
    <property type="entry name" value="LRR_At5g56370"/>
    <property type="match status" value="1"/>
</dbReference>
<dbReference type="SMART" id="SM00579">
    <property type="entry name" value="FBD"/>
    <property type="match status" value="1"/>
</dbReference>
<dbReference type="SMART" id="SM00256">
    <property type="entry name" value="FBOX"/>
    <property type="match status" value="1"/>
</dbReference>
<dbReference type="SUPFAM" id="SSF81383">
    <property type="entry name" value="F-box domain"/>
    <property type="match status" value="1"/>
</dbReference>
<dbReference type="SUPFAM" id="SSF52047">
    <property type="entry name" value="RNI-like"/>
    <property type="match status" value="1"/>
</dbReference>
<sequence>MDRISQLSDDLLLQILSFIPGKDVVATSLLSKRWQSLWMLVSELEYDDSYHTGDYKSFSQFVYRSLLSNNAPVIKHLHLNLGPDCPAIDIGLWIGFALTRRLRQLKINIRTSSNDASFSLPSSLYTSDTLETLRLINFVLLDVPSSVCLPSLKVLHLKTVDYEDDASLPSLLFGCPNLEELFVERHDQDLEMDVTFVVPSLRRLSMIDKNYGQCDRYVIDVPSLKYLNITDDAVYDVRQIENMPELVEAHVDITQGVTHKFLRALTSVRQLSLCLSLSEVMCPSGIIFSQLVHLNLSTVVKGWWDLLTSMLQDSPKLQSLKLIDKQHESGLCGIETPIGWKLPSSVPECLLFSLEAFEWIGYKGRRGDREVATYVLKNAACLRTAKFSPESTDVGEKYHMLKELASVPTASTSSKLLFD</sequence>
<feature type="chain" id="PRO_0000283119" description="F-box/FBD/LRR-repeat protein At4g26340">
    <location>
        <begin position="1"/>
        <end position="419"/>
    </location>
</feature>
<feature type="domain" description="F-box">
    <location>
        <begin position="1"/>
        <end position="53"/>
    </location>
</feature>
<feature type="repeat" description="LRR 1">
    <location>
        <begin position="55"/>
        <end position="81"/>
    </location>
</feature>
<feature type="repeat" description="LRR 2">
    <location>
        <begin position="132"/>
        <end position="159"/>
    </location>
</feature>
<feature type="repeat" description="LRR 3">
    <location>
        <begin position="160"/>
        <end position="185"/>
    </location>
</feature>
<feature type="repeat" description="LRR 4">
    <location>
        <begin position="187"/>
        <end position="208"/>
    </location>
</feature>
<feature type="repeat" description="LRR 5">
    <location>
        <begin position="226"/>
        <end position="253"/>
    </location>
</feature>
<feature type="repeat" description="LRR 6">
    <location>
        <begin position="254"/>
        <end position="284"/>
    </location>
</feature>
<feature type="repeat" description="LRR 7">
    <location>
        <begin position="299"/>
        <end position="324"/>
    </location>
</feature>
<feature type="domain" description="FBD">
    <location>
        <begin position="339"/>
        <end position="389"/>
    </location>
</feature>
<organism>
    <name type="scientific">Arabidopsis thaliana</name>
    <name type="common">Mouse-ear cress</name>
    <dbReference type="NCBI Taxonomy" id="3702"/>
    <lineage>
        <taxon>Eukaryota</taxon>
        <taxon>Viridiplantae</taxon>
        <taxon>Streptophyta</taxon>
        <taxon>Embryophyta</taxon>
        <taxon>Tracheophyta</taxon>
        <taxon>Spermatophyta</taxon>
        <taxon>Magnoliopsida</taxon>
        <taxon>eudicotyledons</taxon>
        <taxon>Gunneridae</taxon>
        <taxon>Pentapetalae</taxon>
        <taxon>rosids</taxon>
        <taxon>malvids</taxon>
        <taxon>Brassicales</taxon>
        <taxon>Brassicaceae</taxon>
        <taxon>Camelineae</taxon>
        <taxon>Arabidopsis</taxon>
    </lineage>
</organism>
<accession>Q8H1R7</accession>
<accession>Q9STQ1</accession>
<protein>
    <recommendedName>
        <fullName>F-box/FBD/LRR-repeat protein At4g26340</fullName>
    </recommendedName>
</protein>
<comment type="sequence caution" evidence="1">
    <conflict type="erroneous gene model prediction">
        <sequence resource="EMBL-CDS" id="CAB38963"/>
    </conflict>
</comment>
<comment type="sequence caution" evidence="1">
    <conflict type="erroneous gene model prediction">
        <sequence resource="EMBL-CDS" id="CAB79489"/>
    </conflict>
</comment>
<gene>
    <name type="ordered locus">At4g26340</name>
    <name type="ORF">T25K17.150</name>
</gene>
<proteinExistence type="evidence at transcript level"/>
<evidence type="ECO:0000305" key="1"/>